<keyword id="KW-1003">Cell membrane</keyword>
<keyword id="KW-0238">DNA-binding</keyword>
<keyword id="KW-0413">Isomerase</keyword>
<keyword id="KW-0472">Membrane</keyword>
<keyword id="KW-0799">Topoisomerase</keyword>
<protein>
    <recommendedName>
        <fullName evidence="1">DNA topoisomerase 4 subunit A</fullName>
        <ecNumber evidence="1">5.6.2.2</ecNumber>
    </recommendedName>
    <alternativeName>
        <fullName evidence="1">Topoisomerase IV subunit A</fullName>
    </alternativeName>
</protein>
<proteinExistence type="inferred from homology"/>
<comment type="function">
    <text evidence="1">Topoisomerase IV is essential for chromosome segregation. It relaxes supercoiled DNA. Performs the decatenation events required during the replication of a circular DNA molecule.</text>
</comment>
<comment type="catalytic activity">
    <reaction evidence="1">
        <text>ATP-dependent breakage, passage and rejoining of double-stranded DNA.</text>
        <dbReference type="EC" id="5.6.2.2"/>
    </reaction>
</comment>
<comment type="subunit">
    <text evidence="1">Heterotetramer composed of ParC and ParE.</text>
</comment>
<comment type="subcellular location">
    <subcellularLocation>
        <location evidence="1">Cell membrane</location>
        <topology evidence="1">Peripheral membrane protein</topology>
    </subcellularLocation>
</comment>
<comment type="similarity">
    <text evidence="1">Belongs to the type II topoisomerase GyrA/ParC subunit family. ParC type 1 subfamily.</text>
</comment>
<reference key="1">
    <citation type="journal article" date="2001" name="Science">
        <title>Mechanisms of evolution in Rickettsia conorii and R. prowazekii.</title>
        <authorList>
            <person name="Ogata H."/>
            <person name="Audic S."/>
            <person name="Renesto-Audiffren P."/>
            <person name="Fournier P.-E."/>
            <person name="Barbe V."/>
            <person name="Samson D."/>
            <person name="Roux V."/>
            <person name="Cossart P."/>
            <person name="Weissenbach J."/>
            <person name="Claverie J.-M."/>
            <person name="Raoult D."/>
        </authorList>
    </citation>
    <scope>NUCLEOTIDE SEQUENCE [LARGE SCALE GENOMIC DNA]</scope>
    <source>
        <strain>ATCC VR-613 / Malish 7</strain>
    </source>
</reference>
<name>PARC_RICCN</name>
<feature type="chain" id="PRO_0000145405" description="DNA topoisomerase 4 subunit A">
    <location>
        <begin position="1"/>
        <end position="738"/>
    </location>
</feature>
<feature type="domain" description="Topo IIA-type catalytic" evidence="2">
    <location>
        <begin position="32"/>
        <end position="496"/>
    </location>
</feature>
<feature type="active site" description="O-(5'-phospho-DNA)-tyrosine intermediate" evidence="1">
    <location>
        <position position="120"/>
    </location>
</feature>
<feature type="site" description="Interaction with DNA" evidence="1">
    <location>
        <position position="40"/>
    </location>
</feature>
<feature type="site" description="Interaction with DNA" evidence="1">
    <location>
        <position position="76"/>
    </location>
</feature>
<feature type="site" description="Interaction with DNA" evidence="1">
    <location>
        <position position="78"/>
    </location>
</feature>
<feature type="site" description="Transition state stabilizer" evidence="1">
    <location>
        <position position="119"/>
    </location>
</feature>
<accession>Q92JH0</accession>
<gene>
    <name evidence="1" type="primary">parC</name>
    <name type="ordered locus">RC0097</name>
</gene>
<dbReference type="EC" id="5.6.2.2" evidence="1"/>
<dbReference type="EMBL" id="AE006914">
    <property type="protein sequence ID" value="AAL02635.1"/>
    <property type="molecule type" value="Genomic_DNA"/>
</dbReference>
<dbReference type="PIR" id="A97712">
    <property type="entry name" value="A97712"/>
</dbReference>
<dbReference type="RefSeq" id="WP_010976781.1">
    <property type="nucleotide sequence ID" value="NC_003103.1"/>
</dbReference>
<dbReference type="SMR" id="Q92JH0"/>
<dbReference type="GeneID" id="928101"/>
<dbReference type="KEGG" id="rco:RC0097"/>
<dbReference type="PATRIC" id="fig|272944.4.peg.115"/>
<dbReference type="HOGENOM" id="CLU_002977_4_1_5"/>
<dbReference type="Proteomes" id="UP000000816">
    <property type="component" value="Chromosome"/>
</dbReference>
<dbReference type="GO" id="GO:0005694">
    <property type="term" value="C:chromosome"/>
    <property type="evidence" value="ECO:0007669"/>
    <property type="project" value="InterPro"/>
</dbReference>
<dbReference type="GO" id="GO:0005737">
    <property type="term" value="C:cytoplasm"/>
    <property type="evidence" value="ECO:0007669"/>
    <property type="project" value="TreeGrafter"/>
</dbReference>
<dbReference type="GO" id="GO:0009330">
    <property type="term" value="C:DNA topoisomerase type II (double strand cut, ATP-hydrolyzing) complex"/>
    <property type="evidence" value="ECO:0007669"/>
    <property type="project" value="TreeGrafter"/>
</dbReference>
<dbReference type="GO" id="GO:0019897">
    <property type="term" value="C:extrinsic component of plasma membrane"/>
    <property type="evidence" value="ECO:0007669"/>
    <property type="project" value="UniProtKB-UniRule"/>
</dbReference>
<dbReference type="GO" id="GO:0005524">
    <property type="term" value="F:ATP binding"/>
    <property type="evidence" value="ECO:0007669"/>
    <property type="project" value="InterPro"/>
</dbReference>
<dbReference type="GO" id="GO:0003677">
    <property type="term" value="F:DNA binding"/>
    <property type="evidence" value="ECO:0007669"/>
    <property type="project" value="UniProtKB-UniRule"/>
</dbReference>
<dbReference type="GO" id="GO:0003918">
    <property type="term" value="F:DNA topoisomerase type II (double strand cut, ATP-hydrolyzing) activity"/>
    <property type="evidence" value="ECO:0007669"/>
    <property type="project" value="UniProtKB-UniRule"/>
</dbReference>
<dbReference type="GO" id="GO:0007059">
    <property type="term" value="P:chromosome segregation"/>
    <property type="evidence" value="ECO:0007669"/>
    <property type="project" value="UniProtKB-UniRule"/>
</dbReference>
<dbReference type="GO" id="GO:0006265">
    <property type="term" value="P:DNA topological change"/>
    <property type="evidence" value="ECO:0007669"/>
    <property type="project" value="UniProtKB-UniRule"/>
</dbReference>
<dbReference type="CDD" id="cd00187">
    <property type="entry name" value="TOP4c"/>
    <property type="match status" value="1"/>
</dbReference>
<dbReference type="FunFam" id="1.10.268.10:FF:000001">
    <property type="entry name" value="DNA gyrase subunit A"/>
    <property type="match status" value="1"/>
</dbReference>
<dbReference type="FunFam" id="3.90.199.10:FF:000001">
    <property type="entry name" value="DNA gyrase subunit A"/>
    <property type="match status" value="1"/>
</dbReference>
<dbReference type="Gene3D" id="3.30.1360.40">
    <property type="match status" value="1"/>
</dbReference>
<dbReference type="Gene3D" id="2.120.10.90">
    <property type="entry name" value="DNA gyrase/topoisomerase IV, subunit A, C-terminal"/>
    <property type="match status" value="1"/>
</dbReference>
<dbReference type="Gene3D" id="3.90.199.10">
    <property type="entry name" value="Topoisomerase II, domain 5"/>
    <property type="match status" value="1"/>
</dbReference>
<dbReference type="Gene3D" id="1.10.268.10">
    <property type="entry name" value="Topoisomerase, domain 3"/>
    <property type="match status" value="1"/>
</dbReference>
<dbReference type="HAMAP" id="MF_00936">
    <property type="entry name" value="ParC_type1"/>
    <property type="match status" value="1"/>
</dbReference>
<dbReference type="InterPro" id="IPR006691">
    <property type="entry name" value="GyrA/parC_rep"/>
</dbReference>
<dbReference type="InterPro" id="IPR035516">
    <property type="entry name" value="Gyrase/topoIV_suA_C"/>
</dbReference>
<dbReference type="InterPro" id="IPR013760">
    <property type="entry name" value="Topo_IIA-like_dom_sf"/>
</dbReference>
<dbReference type="InterPro" id="IPR013758">
    <property type="entry name" value="Topo_IIA_A/C_ab"/>
</dbReference>
<dbReference type="InterPro" id="IPR013757">
    <property type="entry name" value="Topo_IIA_A_a_sf"/>
</dbReference>
<dbReference type="InterPro" id="IPR002205">
    <property type="entry name" value="Topo_IIA_dom_A"/>
</dbReference>
<dbReference type="InterPro" id="IPR005742">
    <property type="entry name" value="TopoIV_A_Gneg"/>
</dbReference>
<dbReference type="InterPro" id="IPR050220">
    <property type="entry name" value="Type_II_DNA_Topoisomerases"/>
</dbReference>
<dbReference type="NCBIfam" id="TIGR01062">
    <property type="entry name" value="parC_Gneg"/>
    <property type="match status" value="1"/>
</dbReference>
<dbReference type="NCBIfam" id="NF004044">
    <property type="entry name" value="PRK05561.1"/>
    <property type="match status" value="1"/>
</dbReference>
<dbReference type="PANTHER" id="PTHR43493">
    <property type="entry name" value="DNA GYRASE/TOPOISOMERASE SUBUNIT A"/>
    <property type="match status" value="1"/>
</dbReference>
<dbReference type="PANTHER" id="PTHR43493:SF1">
    <property type="entry name" value="DNA TOPOISOMERASE 4 SUBUNIT A"/>
    <property type="match status" value="1"/>
</dbReference>
<dbReference type="Pfam" id="PF03989">
    <property type="entry name" value="DNA_gyraseA_C"/>
    <property type="match status" value="2"/>
</dbReference>
<dbReference type="Pfam" id="PF00521">
    <property type="entry name" value="DNA_topoisoIV"/>
    <property type="match status" value="1"/>
</dbReference>
<dbReference type="SMART" id="SM00434">
    <property type="entry name" value="TOP4c"/>
    <property type="match status" value="1"/>
</dbReference>
<dbReference type="SUPFAM" id="SSF101904">
    <property type="entry name" value="GyrA/ParC C-terminal domain-like"/>
    <property type="match status" value="1"/>
</dbReference>
<dbReference type="SUPFAM" id="SSF56719">
    <property type="entry name" value="Type II DNA topoisomerase"/>
    <property type="match status" value="1"/>
</dbReference>
<dbReference type="PROSITE" id="PS52040">
    <property type="entry name" value="TOPO_IIA"/>
    <property type="match status" value="1"/>
</dbReference>
<evidence type="ECO:0000255" key="1">
    <source>
        <dbReference type="HAMAP-Rule" id="MF_00936"/>
    </source>
</evidence>
<evidence type="ECO:0000255" key="2">
    <source>
        <dbReference type="PROSITE-ProRule" id="PRU01384"/>
    </source>
</evidence>
<sequence>MKEAKVENIDFGNALSERYLAYALSTIMSRSLPDVRDGLKPVHRRLLYAMLQLRLEPNSGYKKCARVVGDVIGKYHPHGDVAVYDTLVRLAQHFSLRYPLIDGQGNFGSIDGDNAAAMRYTESRMTDICTLLMEDIDKDTVDFRPTYDGSDLEPVIMPASFPNLLANGSEGIAVGMATNIPPHNLHELCDALIHLINHPKAEINDIINFVKGPDFPTGGIIIDKAEVINAAYTTGRGSLRVRSRWEKEELSYGTYQIVVTEIPYQVQKSKLIEQIAILLKDKKIPLVSNIRDESTDIIRLVIEPRDRGCDPQIVMESLFKLTNLESRIQLNMNVIGSNNVPRVMNILEILQEFLYHRQNIVTRRSTYLLNKIKHRLEILKGLRIAYLNLDEIIKIIREEDEPKAIMMEWFKLTEIQVEAILNTRLRSLRKLEEQEIINEHSNLQKQQAILEEILNNPKELWKIVKKEIKTVQTKFGLNTVIGARRTSFEEVTLTNQVVDITAFITKEPITIICSKMGWVRSLKGHNTDLSTIKYKEGDAEKFILEAYTTDKILIVSSEGRFFTLLADNISKGKGTGESIKLLVDIGNNDITNILVYKPDQLLLLASSVGKGFLVNSNEVMAQTKTGKQIMNVPDGHVCIACLPVNGDSIACIGESRKLLVFNIDEIPEMKKGQGVTLQKFKNAKLLDIKIFNKEDGLGWNNNGKVKLEKNIVAFLGKRGSTGKLPPMGFPKNNRFSSY</sequence>
<organism>
    <name type="scientific">Rickettsia conorii (strain ATCC VR-613 / Malish 7)</name>
    <dbReference type="NCBI Taxonomy" id="272944"/>
    <lineage>
        <taxon>Bacteria</taxon>
        <taxon>Pseudomonadati</taxon>
        <taxon>Pseudomonadota</taxon>
        <taxon>Alphaproteobacteria</taxon>
        <taxon>Rickettsiales</taxon>
        <taxon>Rickettsiaceae</taxon>
        <taxon>Rickettsieae</taxon>
        <taxon>Rickettsia</taxon>
        <taxon>spotted fever group</taxon>
    </lineage>
</organism>